<accession>Q8BHD7</accession>
<accession>A2ANH0</accession>
<accession>A2ANH1</accession>
<accession>Q923C3</accession>
<dbReference type="EMBL" id="AK033732">
    <property type="protein sequence ID" value="BAC28453.1"/>
    <property type="molecule type" value="mRNA"/>
</dbReference>
<dbReference type="EMBL" id="AK088560">
    <property type="protein sequence ID" value="BAC40425.1"/>
    <property type="molecule type" value="mRNA"/>
</dbReference>
<dbReference type="EMBL" id="AL824704">
    <property type="status" value="NOT_ANNOTATED_CDS"/>
    <property type="molecule type" value="Genomic_DNA"/>
</dbReference>
<dbReference type="EMBL" id="BC006638">
    <property type="protein sequence ID" value="AAH06638.1"/>
    <property type="molecule type" value="mRNA"/>
</dbReference>
<dbReference type="EMBL" id="BC057641">
    <property type="protein sequence ID" value="AAH57641.1"/>
    <property type="molecule type" value="mRNA"/>
</dbReference>
<dbReference type="CCDS" id="CCDS18221.1">
    <molecule id="Q8BHD7-1"/>
</dbReference>
<dbReference type="RefSeq" id="NP_001391365.1">
    <molecule id="Q8BHD7-1"/>
    <property type="nucleotide sequence ID" value="NM_001404436.1"/>
</dbReference>
<dbReference type="RefSeq" id="NP_001391366.1">
    <molecule id="Q8BHD7-2"/>
    <property type="nucleotide sequence ID" value="NM_001404437.1"/>
</dbReference>
<dbReference type="RefSeq" id="NP_659153.2">
    <property type="nucleotide sequence ID" value="NM_144904.2"/>
</dbReference>
<dbReference type="RefSeq" id="NP_835458.1">
    <molecule id="Q8BHD7-1"/>
    <property type="nucleotide sequence ID" value="NM_178164.4"/>
</dbReference>
<dbReference type="RefSeq" id="XP_006537917.1">
    <property type="nucleotide sequence ID" value="XM_006537854.3"/>
</dbReference>
<dbReference type="SMR" id="Q8BHD7"/>
<dbReference type="BioGRID" id="230952">
    <property type="interactions" value="5"/>
</dbReference>
<dbReference type="FunCoup" id="Q8BHD7">
    <property type="interactions" value="3611"/>
</dbReference>
<dbReference type="STRING" id="10090.ENSMUSP00000099947"/>
<dbReference type="iPTMnet" id="Q8BHD7"/>
<dbReference type="PhosphoSitePlus" id="Q8BHD7"/>
<dbReference type="jPOST" id="Q8BHD7"/>
<dbReference type="PaxDb" id="10090-ENSMUSP00000099947"/>
<dbReference type="PeptideAtlas" id="Q8BHD7"/>
<dbReference type="ProteomicsDB" id="291613">
    <molecule id="Q8BHD7-1"/>
</dbReference>
<dbReference type="ProteomicsDB" id="291614">
    <molecule id="Q8BHD7-2"/>
</dbReference>
<dbReference type="Pumba" id="Q8BHD7"/>
<dbReference type="TopDownProteomics" id="Q8BHD7-1">
    <molecule id="Q8BHD7-1"/>
</dbReference>
<dbReference type="Antibodypedia" id="29656">
    <property type="antibodies" value="168 antibodies from 23 providers"/>
</dbReference>
<dbReference type="DNASU" id="230257"/>
<dbReference type="Ensembl" id="ENSMUST00000030076.12">
    <molecule id="Q8BHD7-1"/>
    <property type="protein sequence ID" value="ENSMUSP00000030076.6"/>
    <property type="gene ID" value="ENSMUSG00000028382.16"/>
</dbReference>
<dbReference type="Ensembl" id="ENSMUST00000148331.9">
    <molecule id="Q8BHD7-2"/>
    <property type="protein sequence ID" value="ENSMUSP00000122840.3"/>
    <property type="gene ID" value="ENSMUSG00000028382.16"/>
</dbReference>
<dbReference type="Ensembl" id="ENSMUST00000172768.8">
    <molecule id="Q8BHD7-2"/>
    <property type="protein sequence ID" value="ENSMUSP00000134102.2"/>
    <property type="gene ID" value="ENSMUSG00000028382.16"/>
</dbReference>
<dbReference type="GeneID" id="230257"/>
<dbReference type="KEGG" id="mmu:230257"/>
<dbReference type="UCSC" id="uc008szx.2">
    <molecule id="Q8BHD7-1"/>
    <property type="organism name" value="mouse"/>
</dbReference>
<dbReference type="AGR" id="MGI:1923334"/>
<dbReference type="CTD" id="9991"/>
<dbReference type="MGI" id="MGI:1923334">
    <property type="gene designation" value="Ptbp3"/>
</dbReference>
<dbReference type="VEuPathDB" id="HostDB:ENSMUSG00000028382"/>
<dbReference type="eggNOG" id="KOG1190">
    <property type="taxonomic scope" value="Eukaryota"/>
</dbReference>
<dbReference type="GeneTree" id="ENSGT01050000244924"/>
<dbReference type="InParanoid" id="Q8BHD7"/>
<dbReference type="PhylomeDB" id="Q8BHD7"/>
<dbReference type="BioGRID-ORCS" id="230257">
    <property type="hits" value="3 hits in 111 CRISPR screens"/>
</dbReference>
<dbReference type="ChiTaRS" id="Ptbp3">
    <property type="organism name" value="mouse"/>
</dbReference>
<dbReference type="PRO" id="PR:Q8BHD7"/>
<dbReference type="Proteomes" id="UP000000589">
    <property type="component" value="Chromosome 4"/>
</dbReference>
<dbReference type="RNAct" id="Q8BHD7">
    <property type="molecule type" value="protein"/>
</dbReference>
<dbReference type="Bgee" id="ENSMUSG00000028382">
    <property type="expression patterns" value="Expressed in undifferentiated genital tubercle and 259 other cell types or tissues"/>
</dbReference>
<dbReference type="ExpressionAtlas" id="Q8BHD7">
    <property type="expression patterns" value="baseline and differential"/>
</dbReference>
<dbReference type="GO" id="GO:0005634">
    <property type="term" value="C:nucleus"/>
    <property type="evidence" value="ECO:0007669"/>
    <property type="project" value="InterPro"/>
</dbReference>
<dbReference type="GO" id="GO:0003723">
    <property type="term" value="F:RNA binding"/>
    <property type="evidence" value="ECO:0007669"/>
    <property type="project" value="UniProtKB-KW"/>
</dbReference>
<dbReference type="GO" id="GO:0043249">
    <property type="term" value="P:erythrocyte maturation"/>
    <property type="evidence" value="ECO:0007669"/>
    <property type="project" value="UniProtKB-KW"/>
</dbReference>
<dbReference type="GO" id="GO:0006397">
    <property type="term" value="P:mRNA processing"/>
    <property type="evidence" value="ECO:0007669"/>
    <property type="project" value="UniProtKB-KW"/>
</dbReference>
<dbReference type="GO" id="GO:0048025">
    <property type="term" value="P:negative regulation of mRNA splicing, via spliceosome"/>
    <property type="evidence" value="ECO:0000315"/>
    <property type="project" value="MGI"/>
</dbReference>
<dbReference type="GO" id="GO:0008380">
    <property type="term" value="P:RNA splicing"/>
    <property type="evidence" value="ECO:0007669"/>
    <property type="project" value="UniProtKB-KW"/>
</dbReference>
<dbReference type="CDD" id="cd12779">
    <property type="entry name" value="RRM1_ROD1"/>
    <property type="match status" value="1"/>
</dbReference>
<dbReference type="CDD" id="cd12693">
    <property type="entry name" value="RRM2_PTBP1_like"/>
    <property type="match status" value="1"/>
</dbReference>
<dbReference type="FunFam" id="3.30.70.330:FF:000223">
    <property type="entry name" value="Polypyrimidine tract binding protein 3"/>
    <property type="match status" value="1"/>
</dbReference>
<dbReference type="FunFam" id="3.30.70.330:FF:000036">
    <property type="entry name" value="polypyrimidine tract-binding protein 1 isoform X2"/>
    <property type="match status" value="1"/>
</dbReference>
<dbReference type="FunFam" id="3.30.70.330:FF:000018">
    <property type="entry name" value="Polypyrimidine tract-binding protein 2 isoform 1"/>
    <property type="match status" value="1"/>
</dbReference>
<dbReference type="FunFam" id="3.30.70.330:FF:000032">
    <property type="entry name" value="Polypyrimidine tract-binding protein 2 isoform 1"/>
    <property type="match status" value="1"/>
</dbReference>
<dbReference type="Gene3D" id="3.30.70.330">
    <property type="match status" value="4"/>
</dbReference>
<dbReference type="InterPro" id="IPR006536">
    <property type="entry name" value="HnRNP-L/PTB"/>
</dbReference>
<dbReference type="InterPro" id="IPR012677">
    <property type="entry name" value="Nucleotide-bd_a/b_plait_sf"/>
</dbReference>
<dbReference type="InterPro" id="IPR021790">
    <property type="entry name" value="PTBP1-like_RRM2"/>
</dbReference>
<dbReference type="InterPro" id="IPR035979">
    <property type="entry name" value="RBD_domain_sf"/>
</dbReference>
<dbReference type="InterPro" id="IPR034326">
    <property type="entry name" value="ROD1_RRM1"/>
</dbReference>
<dbReference type="InterPro" id="IPR000504">
    <property type="entry name" value="RRM_dom"/>
</dbReference>
<dbReference type="NCBIfam" id="TIGR01649">
    <property type="entry name" value="hnRNP-L_PTB"/>
    <property type="match status" value="1"/>
</dbReference>
<dbReference type="PANTHER" id="PTHR15592">
    <property type="entry name" value="MATRIN 3/NUCLEAR PROTEIN 220-RELATED"/>
    <property type="match status" value="1"/>
</dbReference>
<dbReference type="Pfam" id="PF00076">
    <property type="entry name" value="RRM_1"/>
    <property type="match status" value="1"/>
</dbReference>
<dbReference type="Pfam" id="PF13893">
    <property type="entry name" value="RRM_5"/>
    <property type="match status" value="1"/>
</dbReference>
<dbReference type="Pfam" id="PF11835">
    <property type="entry name" value="RRM_8"/>
    <property type="match status" value="1"/>
</dbReference>
<dbReference type="SMART" id="SM00360">
    <property type="entry name" value="RRM"/>
    <property type="match status" value="4"/>
</dbReference>
<dbReference type="SUPFAM" id="SSF54928">
    <property type="entry name" value="RNA-binding domain, RBD"/>
    <property type="match status" value="3"/>
</dbReference>
<dbReference type="PROSITE" id="PS50102">
    <property type="entry name" value="RRM"/>
    <property type="match status" value="4"/>
</dbReference>
<reference key="1">
    <citation type="journal article" date="2005" name="Science">
        <title>The transcriptional landscape of the mammalian genome.</title>
        <authorList>
            <person name="Carninci P."/>
            <person name="Kasukawa T."/>
            <person name="Katayama S."/>
            <person name="Gough J."/>
            <person name="Frith M.C."/>
            <person name="Maeda N."/>
            <person name="Oyama R."/>
            <person name="Ravasi T."/>
            <person name="Lenhard B."/>
            <person name="Wells C."/>
            <person name="Kodzius R."/>
            <person name="Shimokawa K."/>
            <person name="Bajic V.B."/>
            <person name="Brenner S.E."/>
            <person name="Batalov S."/>
            <person name="Forrest A.R."/>
            <person name="Zavolan M."/>
            <person name="Davis M.J."/>
            <person name="Wilming L.G."/>
            <person name="Aidinis V."/>
            <person name="Allen J.E."/>
            <person name="Ambesi-Impiombato A."/>
            <person name="Apweiler R."/>
            <person name="Aturaliya R.N."/>
            <person name="Bailey T.L."/>
            <person name="Bansal M."/>
            <person name="Baxter L."/>
            <person name="Beisel K.W."/>
            <person name="Bersano T."/>
            <person name="Bono H."/>
            <person name="Chalk A.M."/>
            <person name="Chiu K.P."/>
            <person name="Choudhary V."/>
            <person name="Christoffels A."/>
            <person name="Clutterbuck D.R."/>
            <person name="Crowe M.L."/>
            <person name="Dalla E."/>
            <person name="Dalrymple B.P."/>
            <person name="de Bono B."/>
            <person name="Della Gatta G."/>
            <person name="di Bernardo D."/>
            <person name="Down T."/>
            <person name="Engstrom P."/>
            <person name="Fagiolini M."/>
            <person name="Faulkner G."/>
            <person name="Fletcher C.F."/>
            <person name="Fukushima T."/>
            <person name="Furuno M."/>
            <person name="Futaki S."/>
            <person name="Gariboldi M."/>
            <person name="Georgii-Hemming P."/>
            <person name="Gingeras T.R."/>
            <person name="Gojobori T."/>
            <person name="Green R.E."/>
            <person name="Gustincich S."/>
            <person name="Harbers M."/>
            <person name="Hayashi Y."/>
            <person name="Hensch T.K."/>
            <person name="Hirokawa N."/>
            <person name="Hill D."/>
            <person name="Huminiecki L."/>
            <person name="Iacono M."/>
            <person name="Ikeo K."/>
            <person name="Iwama A."/>
            <person name="Ishikawa T."/>
            <person name="Jakt M."/>
            <person name="Kanapin A."/>
            <person name="Katoh M."/>
            <person name="Kawasawa Y."/>
            <person name="Kelso J."/>
            <person name="Kitamura H."/>
            <person name="Kitano H."/>
            <person name="Kollias G."/>
            <person name="Krishnan S.P."/>
            <person name="Kruger A."/>
            <person name="Kummerfeld S.K."/>
            <person name="Kurochkin I.V."/>
            <person name="Lareau L.F."/>
            <person name="Lazarevic D."/>
            <person name="Lipovich L."/>
            <person name="Liu J."/>
            <person name="Liuni S."/>
            <person name="McWilliam S."/>
            <person name="Madan Babu M."/>
            <person name="Madera M."/>
            <person name="Marchionni L."/>
            <person name="Matsuda H."/>
            <person name="Matsuzawa S."/>
            <person name="Miki H."/>
            <person name="Mignone F."/>
            <person name="Miyake S."/>
            <person name="Morris K."/>
            <person name="Mottagui-Tabar S."/>
            <person name="Mulder N."/>
            <person name="Nakano N."/>
            <person name="Nakauchi H."/>
            <person name="Ng P."/>
            <person name="Nilsson R."/>
            <person name="Nishiguchi S."/>
            <person name="Nishikawa S."/>
            <person name="Nori F."/>
            <person name="Ohara O."/>
            <person name="Okazaki Y."/>
            <person name="Orlando V."/>
            <person name="Pang K.C."/>
            <person name="Pavan W.J."/>
            <person name="Pavesi G."/>
            <person name="Pesole G."/>
            <person name="Petrovsky N."/>
            <person name="Piazza S."/>
            <person name="Reed J."/>
            <person name="Reid J.F."/>
            <person name="Ring B.Z."/>
            <person name="Ringwald M."/>
            <person name="Rost B."/>
            <person name="Ruan Y."/>
            <person name="Salzberg S.L."/>
            <person name="Sandelin A."/>
            <person name="Schneider C."/>
            <person name="Schoenbach C."/>
            <person name="Sekiguchi K."/>
            <person name="Semple C.A."/>
            <person name="Seno S."/>
            <person name="Sessa L."/>
            <person name="Sheng Y."/>
            <person name="Shibata Y."/>
            <person name="Shimada H."/>
            <person name="Shimada K."/>
            <person name="Silva D."/>
            <person name="Sinclair B."/>
            <person name="Sperling S."/>
            <person name="Stupka E."/>
            <person name="Sugiura K."/>
            <person name="Sultana R."/>
            <person name="Takenaka Y."/>
            <person name="Taki K."/>
            <person name="Tammoja K."/>
            <person name="Tan S.L."/>
            <person name="Tang S."/>
            <person name="Taylor M.S."/>
            <person name="Tegner J."/>
            <person name="Teichmann S.A."/>
            <person name="Ueda H.R."/>
            <person name="van Nimwegen E."/>
            <person name="Verardo R."/>
            <person name="Wei C.L."/>
            <person name="Yagi K."/>
            <person name="Yamanishi H."/>
            <person name="Zabarovsky E."/>
            <person name="Zhu S."/>
            <person name="Zimmer A."/>
            <person name="Hide W."/>
            <person name="Bult C."/>
            <person name="Grimmond S.M."/>
            <person name="Teasdale R.D."/>
            <person name="Liu E.T."/>
            <person name="Brusic V."/>
            <person name="Quackenbush J."/>
            <person name="Wahlestedt C."/>
            <person name="Mattick J.S."/>
            <person name="Hume D.A."/>
            <person name="Kai C."/>
            <person name="Sasaki D."/>
            <person name="Tomaru Y."/>
            <person name="Fukuda S."/>
            <person name="Kanamori-Katayama M."/>
            <person name="Suzuki M."/>
            <person name="Aoki J."/>
            <person name="Arakawa T."/>
            <person name="Iida J."/>
            <person name="Imamura K."/>
            <person name="Itoh M."/>
            <person name="Kato T."/>
            <person name="Kawaji H."/>
            <person name="Kawagashira N."/>
            <person name="Kawashima T."/>
            <person name="Kojima M."/>
            <person name="Kondo S."/>
            <person name="Konno H."/>
            <person name="Nakano K."/>
            <person name="Ninomiya N."/>
            <person name="Nishio T."/>
            <person name="Okada M."/>
            <person name="Plessy C."/>
            <person name="Shibata K."/>
            <person name="Shiraki T."/>
            <person name="Suzuki S."/>
            <person name="Tagami M."/>
            <person name="Waki K."/>
            <person name="Watahiki A."/>
            <person name="Okamura-Oho Y."/>
            <person name="Suzuki H."/>
            <person name="Kawai J."/>
            <person name="Hayashizaki Y."/>
        </authorList>
    </citation>
    <scope>NUCLEOTIDE SEQUENCE [LARGE SCALE MRNA] (ISOFORM 1)</scope>
    <source>
        <strain>C57BL/6J</strain>
        <strain>NOD</strain>
        <tissue>Cecum</tissue>
        <tissue>Thymus</tissue>
    </source>
</reference>
<reference key="2">
    <citation type="journal article" date="2009" name="PLoS Biol.">
        <title>Lineage-specific biology revealed by a finished genome assembly of the mouse.</title>
        <authorList>
            <person name="Church D.M."/>
            <person name="Goodstadt L."/>
            <person name="Hillier L.W."/>
            <person name="Zody M.C."/>
            <person name="Goldstein S."/>
            <person name="She X."/>
            <person name="Bult C.J."/>
            <person name="Agarwala R."/>
            <person name="Cherry J.L."/>
            <person name="DiCuccio M."/>
            <person name="Hlavina W."/>
            <person name="Kapustin Y."/>
            <person name="Meric P."/>
            <person name="Maglott D."/>
            <person name="Birtle Z."/>
            <person name="Marques A.C."/>
            <person name="Graves T."/>
            <person name="Zhou S."/>
            <person name="Teague B."/>
            <person name="Potamousis K."/>
            <person name="Churas C."/>
            <person name="Place M."/>
            <person name="Herschleb J."/>
            <person name="Runnheim R."/>
            <person name="Forrest D."/>
            <person name="Amos-Landgraf J."/>
            <person name="Schwartz D.C."/>
            <person name="Cheng Z."/>
            <person name="Lindblad-Toh K."/>
            <person name="Eichler E.E."/>
            <person name="Ponting C.P."/>
        </authorList>
    </citation>
    <scope>NUCLEOTIDE SEQUENCE [LARGE SCALE GENOMIC DNA]</scope>
    <source>
        <strain>C57BL/6J</strain>
    </source>
</reference>
<reference key="3">
    <citation type="journal article" date="2004" name="Genome Res.">
        <title>The status, quality, and expansion of the NIH full-length cDNA project: the Mammalian Gene Collection (MGC).</title>
        <authorList>
            <consortium name="The MGC Project Team"/>
        </authorList>
    </citation>
    <scope>NUCLEOTIDE SEQUENCE [LARGE SCALE MRNA] (ISOFORMS 1 AND 2)</scope>
    <source>
        <strain>NMRI</strain>
        <tissue>Mammary tumor</tissue>
    </source>
</reference>
<reference key="4">
    <citation type="journal article" date="2010" name="Cell">
        <title>A tissue-specific atlas of mouse protein phosphorylation and expression.</title>
        <authorList>
            <person name="Huttlin E.L."/>
            <person name="Jedrychowski M.P."/>
            <person name="Elias J.E."/>
            <person name="Goswami T."/>
            <person name="Rad R."/>
            <person name="Beausoleil S.A."/>
            <person name="Villen J."/>
            <person name="Haas W."/>
            <person name="Sowa M.E."/>
            <person name="Gygi S.P."/>
        </authorList>
    </citation>
    <scope>IDENTIFICATION BY MASS SPECTROMETRY [LARGE SCALE ANALYSIS]</scope>
    <source>
        <tissue>Brown adipose tissue</tissue>
        <tissue>Liver</tissue>
        <tissue>Lung</tissue>
        <tissue>Pancreas</tissue>
        <tissue>Spleen</tissue>
    </source>
</reference>
<sequence>MNSSTSAGVYANGNDNKKFKGDRPPCSPSRVLHLRKIPCDVTEAEVISLGLPFGKVTNLLMLKGKSQAFLEMASEEAAVTMINYYTPVTPHLRSQPVYIQYSNHRELKTDNLPNQARAQAALQAVSAVQSGNLSLPGATANEGTLLPGQSPVLRIIIENLFYPVTLEVLHQIFSKFGTVLKIITFTKNNQFQALLQYADPVNAQYAKMALDGQNIYNACCTLRIDFSKLTSLNVKYNNDKSRDFTRLDLPTGDGQPSLEPPMAAAFGAPGIMSSPYAGAAGFAPAIAFPQAAGLSVPAVPGALGPLTLTSSAVSGRMAIPGASGMPGNSVLLVTNLNPDFITPHGLFILFGVYGDVHRVKIMFNKKENALVQMADASQAQLAMNHLSGQRLYGKVLRATLSKHQAVQLPREGQEDQGLTKDFSNSPLHRFKKPGSKNFQNIFPPSATLHLSNIPPSVTMDDLKNLFTEAGCSVKAFKFFQKDRKMALIQLGSVEEAIQALIELHNHDLGENHHLRVSFSKSTI</sequence>
<organism>
    <name type="scientific">Mus musculus</name>
    <name type="common">Mouse</name>
    <dbReference type="NCBI Taxonomy" id="10090"/>
    <lineage>
        <taxon>Eukaryota</taxon>
        <taxon>Metazoa</taxon>
        <taxon>Chordata</taxon>
        <taxon>Craniata</taxon>
        <taxon>Vertebrata</taxon>
        <taxon>Euteleostomi</taxon>
        <taxon>Mammalia</taxon>
        <taxon>Eutheria</taxon>
        <taxon>Euarchontoglires</taxon>
        <taxon>Glires</taxon>
        <taxon>Rodentia</taxon>
        <taxon>Myomorpha</taxon>
        <taxon>Muroidea</taxon>
        <taxon>Muridae</taxon>
        <taxon>Murinae</taxon>
        <taxon>Mus</taxon>
        <taxon>Mus</taxon>
    </lineage>
</organism>
<gene>
    <name type="primary">Ptbp3</name>
    <name type="synonym">Rod1</name>
</gene>
<keyword id="KW-0007">Acetylation</keyword>
<keyword id="KW-0025">Alternative splicing</keyword>
<keyword id="KW-0221">Differentiation</keyword>
<keyword id="KW-0265">Erythrocyte maturation</keyword>
<keyword id="KW-1017">Isopeptide bond</keyword>
<keyword id="KW-0507">mRNA processing</keyword>
<keyword id="KW-0508">mRNA splicing</keyword>
<keyword id="KW-0597">Phosphoprotein</keyword>
<keyword id="KW-1185">Reference proteome</keyword>
<keyword id="KW-0677">Repeat</keyword>
<keyword id="KW-0678">Repressor</keyword>
<keyword id="KW-0694">RNA-binding</keyword>
<keyword id="KW-0832">Ubl conjugation</keyword>
<name>PTBP3_MOUSE</name>
<feature type="chain" id="PRO_0000081874" description="Polypyrimidine tract-binding protein 3">
    <location>
        <begin position="1"/>
        <end position="523"/>
    </location>
</feature>
<feature type="domain" description="RRM 1" evidence="4">
    <location>
        <begin position="30"/>
        <end position="114"/>
    </location>
</feature>
<feature type="domain" description="RRM 2" evidence="4">
    <location>
        <begin position="153"/>
        <end position="229"/>
    </location>
</feature>
<feature type="domain" description="RRM 3" evidence="4">
    <location>
        <begin position="329"/>
        <end position="403"/>
    </location>
</feature>
<feature type="domain" description="RRM 4" evidence="4">
    <location>
        <begin position="446"/>
        <end position="521"/>
    </location>
</feature>
<feature type="region of interest" description="Disordered" evidence="5">
    <location>
        <begin position="1"/>
        <end position="25"/>
    </location>
</feature>
<feature type="region of interest" description="Disordered" evidence="5">
    <location>
        <begin position="406"/>
        <end position="426"/>
    </location>
</feature>
<feature type="modified residue" description="Phosphotyrosine" evidence="3">
    <location>
        <position position="98"/>
    </location>
</feature>
<feature type="modified residue" description="Phosphothreonine" evidence="3">
    <location>
        <position position="109"/>
    </location>
</feature>
<feature type="modified residue" description="N6-acetyllysine" evidence="2">
    <location>
        <position position="394"/>
    </location>
</feature>
<feature type="modified residue" description="Phosphoserine" evidence="2">
    <location>
        <position position="425"/>
    </location>
</feature>
<feature type="cross-link" description="Glycyl lysine isopeptide (Lys-Gly) (interchain with G-Cter in SUMO2)" evidence="3">
    <location>
        <position position="36"/>
    </location>
</feature>
<feature type="cross-link" description="Glycyl lysine isopeptide (Lys-Gly) (interchain with G-Cter in SUMO2)" evidence="3">
    <location>
        <position position="187"/>
    </location>
</feature>
<feature type="splice variant" id="VSP_010869" description="In isoform 2." evidence="6">
    <location>
        <begin position="8"/>
        <end position="10"/>
    </location>
</feature>
<evidence type="ECO:0000250" key="1"/>
<evidence type="ECO:0000250" key="2">
    <source>
        <dbReference type="UniProtKB" id="O95758"/>
    </source>
</evidence>
<evidence type="ECO:0000250" key="3">
    <source>
        <dbReference type="UniProtKB" id="P26599"/>
    </source>
</evidence>
<evidence type="ECO:0000255" key="4">
    <source>
        <dbReference type="PROSITE-ProRule" id="PRU00176"/>
    </source>
</evidence>
<evidence type="ECO:0000256" key="5">
    <source>
        <dbReference type="SAM" id="MobiDB-lite"/>
    </source>
</evidence>
<evidence type="ECO:0000303" key="6">
    <source>
    </source>
</evidence>
<comment type="function">
    <text evidence="1">RNA-binding protein that mediates pre-mRNA alternative splicing regulation. Plays a role in the regulation of cell proliferation, differentiation and migration. Positive regulator of EPO-dependent erythropoiesis. Participates in cell differentiation regulation by repressing tissue-specific exons. Promotes Fas exon 6 skipping. Binds RNA, preferentially to both poly(G) and poly(U) (By similarity).</text>
</comment>
<comment type="subunit">
    <text evidence="1">Interacts with THBS4 (via the acidic amphipathic C-terminus).</text>
</comment>
<comment type="alternative products">
    <event type="alternative splicing"/>
    <isoform>
        <id>Q8BHD7-1</id>
        <name>1</name>
        <sequence type="displayed"/>
    </isoform>
    <isoform>
        <id>Q8BHD7-2</id>
        <name>2</name>
        <sequence type="described" ref="VSP_010869"/>
    </isoform>
</comment>
<proteinExistence type="evidence at protein level"/>
<protein>
    <recommendedName>
        <fullName>Polypyrimidine tract-binding protein 3</fullName>
    </recommendedName>
    <alternativeName>
        <fullName>Regulator of differentiation 1</fullName>
        <shortName>Rod1</shortName>
    </alternativeName>
</protein>